<organism>
    <name type="scientific">Mus musculus</name>
    <name type="common">Mouse</name>
    <dbReference type="NCBI Taxonomy" id="10090"/>
    <lineage>
        <taxon>Eukaryota</taxon>
        <taxon>Metazoa</taxon>
        <taxon>Chordata</taxon>
        <taxon>Craniata</taxon>
        <taxon>Vertebrata</taxon>
        <taxon>Euteleostomi</taxon>
        <taxon>Mammalia</taxon>
        <taxon>Eutheria</taxon>
        <taxon>Euarchontoglires</taxon>
        <taxon>Glires</taxon>
        <taxon>Rodentia</taxon>
        <taxon>Myomorpha</taxon>
        <taxon>Muroidea</taxon>
        <taxon>Muridae</taxon>
        <taxon>Murinae</taxon>
        <taxon>Mus</taxon>
        <taxon>Mus</taxon>
    </lineage>
</organism>
<sequence length="622" mass="70120">MLPRRLLLVGEGNFSFAASLIDGLDPSVSVTATGFQHRAALEGDPVALENLKRLRERGVEVRFGVDCTQLSHALPADDRDFDRIYFNFPHCGRKAGVAKNRELLAKFFQSCADVLAKAGEVHVTLCRGQGGTPADKPQREWHNSWQVVAMAALGGFILSDVCPFSCEAVPGYKCTGYRSQDRPFHIEGALTYIFTQSLPFESCQPRTFRVRLEDRWFYFTEPEALPGKLNRRFLEASSCHPIRTINEKLIAELGKTFPLKRLKCPLPLLSRGGPSVFLPATCDLLPTFWIRLHEDNSCSEFQNGEITQEMEEIPVSVSECTLPESPVRDGCKGAQEGICGRVKLGLRPSLLVHVEAVIHSPDFLPASLHVLSGPVFRKCHILPFMMPAFHETLFILGFDNNMKESCLPSLLGHLKDALGNLLTQTLQEGSSLGTSVEFVLQPNGKDYIIHVKSLNFGPDCAENLIIGSILTSKIVKHKHQCFVFVSINLDLLVMLAYGISDWRILWTFDNRFLKRFAPGKIEHFKSYSLYPPCYVHDVSFWVDEKKAFDELEFHTVARAVSQDTVVSVQYRDRFQHPETRQVSLCYRLTYQTCDKALTPQLAAAMQSQFRKEIQRQLHVSPR</sequence>
<reference key="1">
    <citation type="journal article" date="2005" name="Science">
        <title>The transcriptional landscape of the mammalian genome.</title>
        <authorList>
            <person name="Carninci P."/>
            <person name="Kasukawa T."/>
            <person name="Katayama S."/>
            <person name="Gough J."/>
            <person name="Frith M.C."/>
            <person name="Maeda N."/>
            <person name="Oyama R."/>
            <person name="Ravasi T."/>
            <person name="Lenhard B."/>
            <person name="Wells C."/>
            <person name="Kodzius R."/>
            <person name="Shimokawa K."/>
            <person name="Bajic V.B."/>
            <person name="Brenner S.E."/>
            <person name="Batalov S."/>
            <person name="Forrest A.R."/>
            <person name="Zavolan M."/>
            <person name="Davis M.J."/>
            <person name="Wilming L.G."/>
            <person name="Aidinis V."/>
            <person name="Allen J.E."/>
            <person name="Ambesi-Impiombato A."/>
            <person name="Apweiler R."/>
            <person name="Aturaliya R.N."/>
            <person name="Bailey T.L."/>
            <person name="Bansal M."/>
            <person name="Baxter L."/>
            <person name="Beisel K.W."/>
            <person name="Bersano T."/>
            <person name="Bono H."/>
            <person name="Chalk A.M."/>
            <person name="Chiu K.P."/>
            <person name="Choudhary V."/>
            <person name="Christoffels A."/>
            <person name="Clutterbuck D.R."/>
            <person name="Crowe M.L."/>
            <person name="Dalla E."/>
            <person name="Dalrymple B.P."/>
            <person name="de Bono B."/>
            <person name="Della Gatta G."/>
            <person name="di Bernardo D."/>
            <person name="Down T."/>
            <person name="Engstrom P."/>
            <person name="Fagiolini M."/>
            <person name="Faulkner G."/>
            <person name="Fletcher C.F."/>
            <person name="Fukushima T."/>
            <person name="Furuno M."/>
            <person name="Futaki S."/>
            <person name="Gariboldi M."/>
            <person name="Georgii-Hemming P."/>
            <person name="Gingeras T.R."/>
            <person name="Gojobori T."/>
            <person name="Green R.E."/>
            <person name="Gustincich S."/>
            <person name="Harbers M."/>
            <person name="Hayashi Y."/>
            <person name="Hensch T.K."/>
            <person name="Hirokawa N."/>
            <person name="Hill D."/>
            <person name="Huminiecki L."/>
            <person name="Iacono M."/>
            <person name="Ikeo K."/>
            <person name="Iwama A."/>
            <person name="Ishikawa T."/>
            <person name="Jakt M."/>
            <person name="Kanapin A."/>
            <person name="Katoh M."/>
            <person name="Kawasawa Y."/>
            <person name="Kelso J."/>
            <person name="Kitamura H."/>
            <person name="Kitano H."/>
            <person name="Kollias G."/>
            <person name="Krishnan S.P."/>
            <person name="Kruger A."/>
            <person name="Kummerfeld S.K."/>
            <person name="Kurochkin I.V."/>
            <person name="Lareau L.F."/>
            <person name="Lazarevic D."/>
            <person name="Lipovich L."/>
            <person name="Liu J."/>
            <person name="Liuni S."/>
            <person name="McWilliam S."/>
            <person name="Madan Babu M."/>
            <person name="Madera M."/>
            <person name="Marchionni L."/>
            <person name="Matsuda H."/>
            <person name="Matsuzawa S."/>
            <person name="Miki H."/>
            <person name="Mignone F."/>
            <person name="Miyake S."/>
            <person name="Morris K."/>
            <person name="Mottagui-Tabar S."/>
            <person name="Mulder N."/>
            <person name="Nakano N."/>
            <person name="Nakauchi H."/>
            <person name="Ng P."/>
            <person name="Nilsson R."/>
            <person name="Nishiguchi S."/>
            <person name="Nishikawa S."/>
            <person name="Nori F."/>
            <person name="Ohara O."/>
            <person name="Okazaki Y."/>
            <person name="Orlando V."/>
            <person name="Pang K.C."/>
            <person name="Pavan W.J."/>
            <person name="Pavesi G."/>
            <person name="Pesole G."/>
            <person name="Petrovsky N."/>
            <person name="Piazza S."/>
            <person name="Reed J."/>
            <person name="Reid J.F."/>
            <person name="Ring B.Z."/>
            <person name="Ringwald M."/>
            <person name="Rost B."/>
            <person name="Ruan Y."/>
            <person name="Salzberg S.L."/>
            <person name="Sandelin A."/>
            <person name="Schneider C."/>
            <person name="Schoenbach C."/>
            <person name="Sekiguchi K."/>
            <person name="Semple C.A."/>
            <person name="Seno S."/>
            <person name="Sessa L."/>
            <person name="Sheng Y."/>
            <person name="Shibata Y."/>
            <person name="Shimada H."/>
            <person name="Shimada K."/>
            <person name="Silva D."/>
            <person name="Sinclair B."/>
            <person name="Sperling S."/>
            <person name="Stupka E."/>
            <person name="Sugiura K."/>
            <person name="Sultana R."/>
            <person name="Takenaka Y."/>
            <person name="Taki K."/>
            <person name="Tammoja K."/>
            <person name="Tan S.L."/>
            <person name="Tang S."/>
            <person name="Taylor M.S."/>
            <person name="Tegner J."/>
            <person name="Teichmann S.A."/>
            <person name="Ueda H.R."/>
            <person name="van Nimwegen E."/>
            <person name="Verardo R."/>
            <person name="Wei C.L."/>
            <person name="Yagi K."/>
            <person name="Yamanishi H."/>
            <person name="Zabarovsky E."/>
            <person name="Zhu S."/>
            <person name="Zimmer A."/>
            <person name="Hide W."/>
            <person name="Bult C."/>
            <person name="Grimmond S.M."/>
            <person name="Teasdale R.D."/>
            <person name="Liu E.T."/>
            <person name="Brusic V."/>
            <person name="Quackenbush J."/>
            <person name="Wahlestedt C."/>
            <person name="Mattick J.S."/>
            <person name="Hume D.A."/>
            <person name="Kai C."/>
            <person name="Sasaki D."/>
            <person name="Tomaru Y."/>
            <person name="Fukuda S."/>
            <person name="Kanamori-Katayama M."/>
            <person name="Suzuki M."/>
            <person name="Aoki J."/>
            <person name="Arakawa T."/>
            <person name="Iida J."/>
            <person name="Imamura K."/>
            <person name="Itoh M."/>
            <person name="Kato T."/>
            <person name="Kawaji H."/>
            <person name="Kawagashira N."/>
            <person name="Kawashima T."/>
            <person name="Kojima M."/>
            <person name="Kondo S."/>
            <person name="Konno H."/>
            <person name="Nakano K."/>
            <person name="Ninomiya N."/>
            <person name="Nishio T."/>
            <person name="Okada M."/>
            <person name="Plessy C."/>
            <person name="Shibata K."/>
            <person name="Shiraki T."/>
            <person name="Suzuki S."/>
            <person name="Tagami M."/>
            <person name="Waki K."/>
            <person name="Watahiki A."/>
            <person name="Okamura-Oho Y."/>
            <person name="Suzuki H."/>
            <person name="Kawai J."/>
            <person name="Hayashizaki Y."/>
        </authorList>
    </citation>
    <scope>NUCLEOTIDE SEQUENCE [LARGE SCALE MRNA] (ISOFORMS 1 AND 3)</scope>
    <source>
        <strain>C57BL/6J</strain>
        <tissue>Kidney</tissue>
        <tissue>Olfactory bulb</tissue>
        <tissue>Urinary bladder</tissue>
    </source>
</reference>
<reference key="2">
    <citation type="journal article" date="2004" name="Genome Res.">
        <title>The status, quality, and expansion of the NIH full-length cDNA project: the Mammalian Gene Collection (MGC).</title>
        <authorList>
            <consortium name="The MGC Project Team"/>
        </authorList>
    </citation>
    <scope>NUCLEOTIDE SEQUENCE [LARGE SCALE MRNA] (ISOFORMS 2 AND 3)</scope>
</reference>
<dbReference type="EMBL" id="AK035237">
    <property type="protein sequence ID" value="BAC28994.1"/>
    <property type="molecule type" value="mRNA"/>
</dbReference>
<dbReference type="EMBL" id="AK085276">
    <property type="protein sequence ID" value="BAC39409.1"/>
    <property type="molecule type" value="mRNA"/>
</dbReference>
<dbReference type="EMBL" id="AK135025">
    <property type="protein sequence ID" value="BAE22390.1"/>
    <property type="molecule type" value="mRNA"/>
</dbReference>
<dbReference type="EMBL" id="BC116264">
    <property type="protein sequence ID" value="AAI16265.1"/>
    <property type="molecule type" value="mRNA"/>
</dbReference>
<dbReference type="EMBL" id="BC116265">
    <property type="protein sequence ID" value="AAI16266.1"/>
    <property type="molecule type" value="mRNA"/>
</dbReference>
<dbReference type="CCDS" id="CCDS23174.1">
    <molecule id="Q3UY23-1"/>
</dbReference>
<dbReference type="RefSeq" id="NP_941077.2">
    <molecule id="Q3UY23-1"/>
    <property type="nucleotide sequence ID" value="NM_198675.2"/>
</dbReference>
<dbReference type="SMR" id="Q3UY23"/>
<dbReference type="FunCoup" id="Q3UY23">
    <property type="interactions" value="707"/>
</dbReference>
<dbReference type="STRING" id="10090.ENSMUSP00000037082"/>
<dbReference type="GlyGen" id="Q3UY23">
    <property type="glycosylation" value="1 site"/>
</dbReference>
<dbReference type="iPTMnet" id="Q3UY23"/>
<dbReference type="PhosphoSitePlus" id="Q3UY23"/>
<dbReference type="PaxDb" id="10090-ENSMUSP00000037082"/>
<dbReference type="ProteomicsDB" id="272984">
    <molecule id="Q3UY23-1"/>
</dbReference>
<dbReference type="ProteomicsDB" id="272985">
    <molecule id="Q3UY23-2"/>
</dbReference>
<dbReference type="ProteomicsDB" id="272986">
    <molecule id="Q3UY23-3"/>
</dbReference>
<dbReference type="Antibodypedia" id="51439">
    <property type="antibodies" value="14 antibodies from 11 providers"/>
</dbReference>
<dbReference type="Ensembl" id="ENSMUST00000042391.13">
    <molecule id="Q3UY23-1"/>
    <property type="protein sequence ID" value="ENSMUSP00000037082.7"/>
    <property type="gene ID" value="ENSMUSG00000037845.15"/>
</dbReference>
<dbReference type="Ensembl" id="ENSMUST00000176335.2">
    <molecule id="Q3UY23-2"/>
    <property type="protein sequence ID" value="ENSMUSP00000135658.2"/>
    <property type="gene ID" value="ENSMUSG00000037845.15"/>
</dbReference>
<dbReference type="GeneID" id="382137"/>
<dbReference type="KEGG" id="mmu:382137"/>
<dbReference type="UCSC" id="uc009pkq.1">
    <molecule id="Q3UY23-1"/>
    <property type="organism name" value="mouse"/>
</dbReference>
<dbReference type="UCSC" id="uc009pks.1">
    <molecule id="Q3UY23-2"/>
    <property type="organism name" value="mouse"/>
</dbReference>
<dbReference type="AGR" id="MGI:3584513"/>
<dbReference type="CTD" id="91893"/>
<dbReference type="MGI" id="MGI:3584513">
    <property type="gene designation" value="Fdxacb1"/>
</dbReference>
<dbReference type="VEuPathDB" id="HostDB:ENSMUSG00000037845"/>
<dbReference type="eggNOG" id="KOG2783">
    <property type="taxonomic scope" value="Eukaryota"/>
</dbReference>
<dbReference type="eggNOG" id="KOG4174">
    <property type="taxonomic scope" value="Eukaryota"/>
</dbReference>
<dbReference type="GeneTree" id="ENSGT00940000160701"/>
<dbReference type="HOGENOM" id="CLU_030162_0_0_1"/>
<dbReference type="InParanoid" id="Q3UY23"/>
<dbReference type="OMA" id="IRFGVDC"/>
<dbReference type="OrthoDB" id="273345at2759"/>
<dbReference type="PhylomeDB" id="Q3UY23"/>
<dbReference type="TreeFam" id="TF329685"/>
<dbReference type="BioGRID-ORCS" id="382137">
    <property type="hits" value="2 hits in 75 CRISPR screens"/>
</dbReference>
<dbReference type="ChiTaRS" id="Fdxacb1">
    <property type="organism name" value="mouse"/>
</dbReference>
<dbReference type="PRO" id="PR:Q3UY23"/>
<dbReference type="Proteomes" id="UP000000589">
    <property type="component" value="Chromosome 9"/>
</dbReference>
<dbReference type="RNAct" id="Q3UY23">
    <property type="molecule type" value="protein"/>
</dbReference>
<dbReference type="Bgee" id="ENSMUSG00000037845">
    <property type="expression patterns" value="Expressed in spermatocyte and 62 other cell types or tissues"/>
</dbReference>
<dbReference type="ExpressionAtlas" id="Q3UY23">
    <property type="expression patterns" value="baseline and differential"/>
</dbReference>
<dbReference type="GO" id="GO:0070042">
    <property type="term" value="F:rRNA (uridine-N3-)-methyltransferase activity"/>
    <property type="evidence" value="ECO:0007669"/>
    <property type="project" value="InterPro"/>
</dbReference>
<dbReference type="GO" id="GO:0070475">
    <property type="term" value="P:rRNA base methylation"/>
    <property type="evidence" value="ECO:0007669"/>
    <property type="project" value="InterPro"/>
</dbReference>
<dbReference type="CDD" id="cd02440">
    <property type="entry name" value="AdoMet_MTases"/>
    <property type="match status" value="1"/>
</dbReference>
<dbReference type="FunFam" id="3.30.930.10:FF:000081">
    <property type="entry name" value="Ferredoxin-fold anticodon binding domain containing 1"/>
    <property type="match status" value="1"/>
</dbReference>
<dbReference type="FunFam" id="3.30.70.380:FF:000004">
    <property type="entry name" value="Ferredoxin-fold anticodon-binding domain-containing protein 1 homolog"/>
    <property type="match status" value="1"/>
</dbReference>
<dbReference type="FunFam" id="3.40.50.150:FF:000361">
    <property type="entry name" value="Ferredoxin-fold anticodon-binding domain-containing protein 1 homolog"/>
    <property type="match status" value="1"/>
</dbReference>
<dbReference type="Gene3D" id="3.30.70.380">
    <property type="entry name" value="Ferrodoxin-fold anticodon-binding domain"/>
    <property type="match status" value="1"/>
</dbReference>
<dbReference type="Gene3D" id="3.40.50.150">
    <property type="entry name" value="Vaccinia Virus protein VP39"/>
    <property type="match status" value="1"/>
</dbReference>
<dbReference type="InterPro" id="IPR019446">
    <property type="entry name" value="BMT5-like"/>
</dbReference>
<dbReference type="InterPro" id="IPR005121">
    <property type="entry name" value="Fdx_antiC-bd"/>
</dbReference>
<dbReference type="InterPro" id="IPR036690">
    <property type="entry name" value="Fdx_antiC-bd_sf"/>
</dbReference>
<dbReference type="InterPro" id="IPR029063">
    <property type="entry name" value="SAM-dependent_MTases_sf"/>
</dbReference>
<dbReference type="PANTHER" id="PTHR11538:SF26">
    <property type="entry name" value="FERREDOXIN-FOLD ANTICODON-BINDING DOMAIN-CONTAINING PROTEIN 1"/>
    <property type="match status" value="1"/>
</dbReference>
<dbReference type="PANTHER" id="PTHR11538">
    <property type="entry name" value="PHENYLALANYL-TRNA SYNTHETASE"/>
    <property type="match status" value="1"/>
</dbReference>
<dbReference type="Pfam" id="PF10354">
    <property type="entry name" value="BMT5-like"/>
    <property type="match status" value="1"/>
</dbReference>
<dbReference type="Pfam" id="PF03147">
    <property type="entry name" value="FDX-ACB"/>
    <property type="match status" value="1"/>
</dbReference>
<dbReference type="SMART" id="SM00896">
    <property type="entry name" value="FDX-ACB"/>
    <property type="match status" value="1"/>
</dbReference>
<dbReference type="SUPFAM" id="SSF54991">
    <property type="entry name" value="Anticodon-binding domain of PheRS"/>
    <property type="match status" value="1"/>
</dbReference>
<dbReference type="SUPFAM" id="SSF53335">
    <property type="entry name" value="S-adenosyl-L-methionine-dependent methyltransferases"/>
    <property type="match status" value="1"/>
</dbReference>
<dbReference type="PROSITE" id="PS51447">
    <property type="entry name" value="FDX_ACB"/>
    <property type="match status" value="1"/>
</dbReference>
<keyword id="KW-0025">Alternative splicing</keyword>
<keyword id="KW-1185">Reference proteome</keyword>
<evidence type="ECO:0000255" key="1">
    <source>
        <dbReference type="PROSITE-ProRule" id="PRU00778"/>
    </source>
</evidence>
<evidence type="ECO:0000303" key="2">
    <source>
    </source>
</evidence>
<evidence type="ECO:0000303" key="3">
    <source>
    </source>
</evidence>
<evidence type="ECO:0000305" key="4"/>
<name>FDXA1_MOUSE</name>
<accession>Q3UY23</accession>
<accession>Q14B93</accession>
<accession>Q8BUG6</accession>
<accession>Q8BZH7</accession>
<comment type="alternative products">
    <event type="alternative splicing"/>
    <isoform>
        <id>Q3UY23-1</id>
        <name>1</name>
        <sequence type="displayed"/>
    </isoform>
    <isoform>
        <id>Q3UY23-2</id>
        <name>2</name>
        <sequence type="described" ref="VSP_032500 VSP_032501"/>
    </isoform>
    <isoform>
        <id>Q3UY23-3</id>
        <name>3</name>
        <sequence type="described" ref="VSP_032499"/>
    </isoform>
</comment>
<protein>
    <recommendedName>
        <fullName>Ferredoxin-fold anticodon-binding domain-containing protein 1 homolog</fullName>
        <shortName>FDX-ACDB domain-containing protein 1</shortName>
    </recommendedName>
</protein>
<feature type="chain" id="PRO_0000325957" description="Ferredoxin-fold anticodon-binding domain-containing protein 1 homolog">
    <location>
        <begin position="1"/>
        <end position="622"/>
    </location>
</feature>
<feature type="domain" description="FDX-ACB" evidence="1">
    <location>
        <begin position="529"/>
        <end position="622"/>
    </location>
</feature>
<feature type="splice variant" id="VSP_032499" description="In isoform 3." evidence="2 3">
    <location>
        <begin position="1"/>
        <end position="309"/>
    </location>
</feature>
<feature type="splice variant" id="VSP_032500" description="In isoform 2." evidence="2">
    <location>
        <begin position="1"/>
        <end position="149"/>
    </location>
</feature>
<feature type="splice variant" id="VSP_032501" description="In isoform 2." evidence="2">
    <location>
        <begin position="178"/>
        <end position="230"/>
    </location>
</feature>
<feature type="sequence conflict" description="In Ref. 1; BAE22390." evidence="4" ref="1">
    <original>W</original>
    <variation>R</variation>
    <location>
        <position position="506"/>
    </location>
</feature>
<gene>
    <name type="primary">Fdxacb1</name>
</gene>
<proteinExistence type="evidence at transcript level"/>